<feature type="chain" id="PRO_1000068144" description="Large ribosomal subunit protein uL23">
    <location>
        <begin position="1"/>
        <end position="99"/>
    </location>
</feature>
<protein>
    <recommendedName>
        <fullName evidence="1">Large ribosomal subunit protein uL23</fullName>
    </recommendedName>
    <alternativeName>
        <fullName evidence="2">50S ribosomal protein L23</fullName>
    </alternativeName>
</protein>
<comment type="function">
    <text evidence="1">One of the early assembly proteins it binds 23S rRNA. One of the proteins that surrounds the polypeptide exit tunnel on the outside of the ribosome. Forms the main docking site for trigger factor binding to the ribosome.</text>
</comment>
<comment type="subunit">
    <text evidence="1">Part of the 50S ribosomal subunit. Contacts protein L29, and trigger factor when it is bound to the ribosome.</text>
</comment>
<comment type="similarity">
    <text evidence="1">Belongs to the universal ribosomal protein uL23 family.</text>
</comment>
<name>RL23_PSYIN</name>
<reference key="1">
    <citation type="journal article" date="2008" name="BMC Genomics">
        <title>Genomics of an extreme psychrophile, Psychromonas ingrahamii.</title>
        <authorList>
            <person name="Riley M."/>
            <person name="Staley J.T."/>
            <person name="Danchin A."/>
            <person name="Wang T.Z."/>
            <person name="Brettin T.S."/>
            <person name="Hauser L.J."/>
            <person name="Land M.L."/>
            <person name="Thompson L.S."/>
        </authorList>
    </citation>
    <scope>NUCLEOTIDE SEQUENCE [LARGE SCALE GENOMIC DNA]</scope>
    <source>
        <strain>DSM 17664 / CCUG 51855 / 37</strain>
    </source>
</reference>
<sequence>MISEARLLQVILAPHISEKGTLSAENHNTMVFKVAGTATKAEIKAAVQKLFEVEVTGVRTLNVKGKTKRTGQRVGRRSDWKKAYVSLVEGADIDFAGAE</sequence>
<accession>A1T0E0</accession>
<dbReference type="EMBL" id="CP000510">
    <property type="protein sequence ID" value="ABM05205.1"/>
    <property type="molecule type" value="Genomic_DNA"/>
</dbReference>
<dbReference type="RefSeq" id="WP_011771753.1">
    <property type="nucleotide sequence ID" value="NC_008709.1"/>
</dbReference>
<dbReference type="SMR" id="A1T0E0"/>
<dbReference type="STRING" id="357804.Ping_3522"/>
<dbReference type="KEGG" id="pin:Ping_3522"/>
<dbReference type="eggNOG" id="COG0089">
    <property type="taxonomic scope" value="Bacteria"/>
</dbReference>
<dbReference type="HOGENOM" id="CLU_037562_3_1_6"/>
<dbReference type="OrthoDB" id="9793353at2"/>
<dbReference type="Proteomes" id="UP000000639">
    <property type="component" value="Chromosome"/>
</dbReference>
<dbReference type="GO" id="GO:1990904">
    <property type="term" value="C:ribonucleoprotein complex"/>
    <property type="evidence" value="ECO:0007669"/>
    <property type="project" value="UniProtKB-KW"/>
</dbReference>
<dbReference type="GO" id="GO:0005840">
    <property type="term" value="C:ribosome"/>
    <property type="evidence" value="ECO:0007669"/>
    <property type="project" value="UniProtKB-KW"/>
</dbReference>
<dbReference type="GO" id="GO:0019843">
    <property type="term" value="F:rRNA binding"/>
    <property type="evidence" value="ECO:0007669"/>
    <property type="project" value="UniProtKB-UniRule"/>
</dbReference>
<dbReference type="GO" id="GO:0003735">
    <property type="term" value="F:structural constituent of ribosome"/>
    <property type="evidence" value="ECO:0007669"/>
    <property type="project" value="InterPro"/>
</dbReference>
<dbReference type="GO" id="GO:0006412">
    <property type="term" value="P:translation"/>
    <property type="evidence" value="ECO:0007669"/>
    <property type="project" value="UniProtKB-UniRule"/>
</dbReference>
<dbReference type="FunFam" id="3.30.70.330:FF:000001">
    <property type="entry name" value="50S ribosomal protein L23"/>
    <property type="match status" value="1"/>
</dbReference>
<dbReference type="Gene3D" id="3.30.70.330">
    <property type="match status" value="1"/>
</dbReference>
<dbReference type="HAMAP" id="MF_01369_B">
    <property type="entry name" value="Ribosomal_uL23_B"/>
    <property type="match status" value="1"/>
</dbReference>
<dbReference type="InterPro" id="IPR012677">
    <property type="entry name" value="Nucleotide-bd_a/b_plait_sf"/>
</dbReference>
<dbReference type="InterPro" id="IPR013025">
    <property type="entry name" value="Ribosomal_uL23-like"/>
</dbReference>
<dbReference type="InterPro" id="IPR012678">
    <property type="entry name" value="Ribosomal_uL23/eL15/eS24_sf"/>
</dbReference>
<dbReference type="NCBIfam" id="NF004358">
    <property type="entry name" value="PRK05738.1-1"/>
    <property type="match status" value="1"/>
</dbReference>
<dbReference type="NCBIfam" id="NF004359">
    <property type="entry name" value="PRK05738.1-3"/>
    <property type="match status" value="1"/>
</dbReference>
<dbReference type="NCBIfam" id="NF004363">
    <property type="entry name" value="PRK05738.2-4"/>
    <property type="match status" value="1"/>
</dbReference>
<dbReference type="NCBIfam" id="NF004366">
    <property type="entry name" value="PRK05738.3-2"/>
    <property type="match status" value="1"/>
</dbReference>
<dbReference type="PANTHER" id="PTHR11620">
    <property type="entry name" value="60S RIBOSOMAL PROTEIN L23A"/>
    <property type="match status" value="1"/>
</dbReference>
<dbReference type="Pfam" id="PF00276">
    <property type="entry name" value="Ribosomal_L23"/>
    <property type="match status" value="1"/>
</dbReference>
<dbReference type="SUPFAM" id="SSF54189">
    <property type="entry name" value="Ribosomal proteins S24e, L23 and L15e"/>
    <property type="match status" value="1"/>
</dbReference>
<gene>
    <name evidence="1" type="primary">rplW</name>
    <name type="ordered locus">Ping_3522</name>
</gene>
<organism>
    <name type="scientific">Psychromonas ingrahamii (strain DSM 17664 / CCUG 51855 / 37)</name>
    <dbReference type="NCBI Taxonomy" id="357804"/>
    <lineage>
        <taxon>Bacteria</taxon>
        <taxon>Pseudomonadati</taxon>
        <taxon>Pseudomonadota</taxon>
        <taxon>Gammaproteobacteria</taxon>
        <taxon>Alteromonadales</taxon>
        <taxon>Psychromonadaceae</taxon>
        <taxon>Psychromonas</taxon>
    </lineage>
</organism>
<evidence type="ECO:0000255" key="1">
    <source>
        <dbReference type="HAMAP-Rule" id="MF_01369"/>
    </source>
</evidence>
<evidence type="ECO:0000305" key="2"/>
<proteinExistence type="inferred from homology"/>
<keyword id="KW-1185">Reference proteome</keyword>
<keyword id="KW-0687">Ribonucleoprotein</keyword>
<keyword id="KW-0689">Ribosomal protein</keyword>
<keyword id="KW-0694">RNA-binding</keyword>
<keyword id="KW-0699">rRNA-binding</keyword>